<geneLocation type="chloroplast"/>
<accession>A1E9S7</accession>
<sequence length="159" mass="18669">MQQGWLSNWLVKHDVVHRSLGFDHRGVETLQIKAGDWDSIAVILYVYGYNYLRSQCAYDVAPGGSLASVYHLTRIQYGIDNPEEVCIKVFAQKDNPRIPSVFWVWRSADFQERESYDMVGISYDNHPRLKRILMPESWIGWPLRKDYITPNFYEIQDAH</sequence>
<dbReference type="EC" id="7.1.1.-" evidence="1"/>
<dbReference type="EMBL" id="EF115542">
    <property type="protein sequence ID" value="ABK79499.1"/>
    <property type="molecule type" value="Genomic_DNA"/>
</dbReference>
<dbReference type="RefSeq" id="XP_002457908.1">
    <property type="nucleotide sequence ID" value="XM_002457863.1"/>
</dbReference>
<dbReference type="RefSeq" id="YP_899410.1">
    <property type="nucleotide sequence ID" value="NC_008602.1"/>
</dbReference>
<dbReference type="SMR" id="A1E9S7"/>
<dbReference type="FunCoup" id="A1E9S7">
    <property type="interactions" value="28"/>
</dbReference>
<dbReference type="STRING" id="4558.A1E9S7"/>
<dbReference type="EnsemblPlants" id="EES03028">
    <property type="protein sequence ID" value="EES03028"/>
    <property type="gene ID" value="SORBI_3003G172900"/>
</dbReference>
<dbReference type="GeneID" id="4549196"/>
<dbReference type="Gramene" id="EES03028">
    <property type="protein sequence ID" value="EES03028"/>
    <property type="gene ID" value="SORBI_3003G172900"/>
</dbReference>
<dbReference type="KEGG" id="sbi:4549196"/>
<dbReference type="eggNOG" id="KOG1713">
    <property type="taxonomic scope" value="Eukaryota"/>
</dbReference>
<dbReference type="HOGENOM" id="CLU_042628_9_1_1"/>
<dbReference type="InParanoid" id="A1E9S7"/>
<dbReference type="OMA" id="PMPESWI"/>
<dbReference type="OrthoDB" id="580589at2759"/>
<dbReference type="Proteomes" id="UP000000768">
    <property type="component" value="Chloroplast"/>
</dbReference>
<dbReference type="ExpressionAtlas" id="A1E9S7">
    <property type="expression patterns" value="baseline and differential"/>
</dbReference>
<dbReference type="GO" id="GO:0009535">
    <property type="term" value="C:chloroplast thylakoid membrane"/>
    <property type="evidence" value="ECO:0007669"/>
    <property type="project" value="UniProtKB-SubCell"/>
</dbReference>
<dbReference type="GO" id="GO:0008137">
    <property type="term" value="F:NADH dehydrogenase (ubiquinone) activity"/>
    <property type="evidence" value="ECO:0007669"/>
    <property type="project" value="InterPro"/>
</dbReference>
<dbReference type="GO" id="GO:0048038">
    <property type="term" value="F:quinone binding"/>
    <property type="evidence" value="ECO:0007669"/>
    <property type="project" value="UniProtKB-KW"/>
</dbReference>
<dbReference type="GO" id="GO:0019684">
    <property type="term" value="P:photosynthesis, light reaction"/>
    <property type="evidence" value="ECO:0007669"/>
    <property type="project" value="UniProtKB-UniRule"/>
</dbReference>
<dbReference type="Gene3D" id="3.30.460.80">
    <property type="entry name" value="NADH:ubiquinone oxidoreductase, 30kDa subunit"/>
    <property type="match status" value="1"/>
</dbReference>
<dbReference type="HAMAP" id="MF_01357">
    <property type="entry name" value="NDH1_NuoC"/>
    <property type="match status" value="1"/>
</dbReference>
<dbReference type="InterPro" id="IPR010218">
    <property type="entry name" value="NADH_DH_suC"/>
</dbReference>
<dbReference type="InterPro" id="IPR037232">
    <property type="entry name" value="NADH_quin_OxRdtase_su_C/D-like"/>
</dbReference>
<dbReference type="InterPro" id="IPR001268">
    <property type="entry name" value="NADH_UbQ_OxRdtase_30kDa_su"/>
</dbReference>
<dbReference type="InterPro" id="IPR020396">
    <property type="entry name" value="NADH_UbQ_OxRdtase_CS"/>
</dbReference>
<dbReference type="NCBIfam" id="NF009141">
    <property type="entry name" value="PRK12494.1"/>
    <property type="match status" value="1"/>
</dbReference>
<dbReference type="PANTHER" id="PTHR10884:SF14">
    <property type="entry name" value="NADH DEHYDROGENASE [UBIQUINONE] IRON-SULFUR PROTEIN 3, MITOCHONDRIAL"/>
    <property type="match status" value="1"/>
</dbReference>
<dbReference type="PANTHER" id="PTHR10884">
    <property type="entry name" value="NADH DEHYDROGENASE UBIQUINONE IRON-SULFUR PROTEIN 3"/>
    <property type="match status" value="1"/>
</dbReference>
<dbReference type="Pfam" id="PF00329">
    <property type="entry name" value="Complex1_30kDa"/>
    <property type="match status" value="1"/>
</dbReference>
<dbReference type="SUPFAM" id="SSF143243">
    <property type="entry name" value="Nqo5-like"/>
    <property type="match status" value="1"/>
</dbReference>
<dbReference type="PROSITE" id="PS00542">
    <property type="entry name" value="COMPLEX1_30K"/>
    <property type="match status" value="1"/>
</dbReference>
<keyword id="KW-0150">Chloroplast</keyword>
<keyword id="KW-0472">Membrane</keyword>
<keyword id="KW-0520">NAD</keyword>
<keyword id="KW-0521">NADP</keyword>
<keyword id="KW-0934">Plastid</keyword>
<keyword id="KW-0618">Plastoquinone</keyword>
<keyword id="KW-0874">Quinone</keyword>
<keyword id="KW-1185">Reference proteome</keyword>
<keyword id="KW-0793">Thylakoid</keyword>
<keyword id="KW-1278">Translocase</keyword>
<keyword id="KW-0813">Transport</keyword>
<name>NDHJ_SORBI</name>
<gene>
    <name evidence="1" type="primary">ndhJ</name>
</gene>
<comment type="function">
    <text evidence="1">NDH shuttles electrons from NAD(P)H:plastoquinone, via FMN and iron-sulfur (Fe-S) centers, to quinones in the photosynthetic chain and possibly in a chloroplast respiratory chain. The immediate electron acceptor for the enzyme in this species is believed to be plastoquinone. Couples the redox reaction to proton translocation, and thus conserves the redox energy in a proton gradient.</text>
</comment>
<comment type="catalytic activity">
    <reaction evidence="1">
        <text>a plastoquinone + NADH + (n+1) H(+)(in) = a plastoquinol + NAD(+) + n H(+)(out)</text>
        <dbReference type="Rhea" id="RHEA:42608"/>
        <dbReference type="Rhea" id="RHEA-COMP:9561"/>
        <dbReference type="Rhea" id="RHEA-COMP:9562"/>
        <dbReference type="ChEBI" id="CHEBI:15378"/>
        <dbReference type="ChEBI" id="CHEBI:17757"/>
        <dbReference type="ChEBI" id="CHEBI:57540"/>
        <dbReference type="ChEBI" id="CHEBI:57945"/>
        <dbReference type="ChEBI" id="CHEBI:62192"/>
    </reaction>
</comment>
<comment type="catalytic activity">
    <reaction evidence="1">
        <text>a plastoquinone + NADPH + (n+1) H(+)(in) = a plastoquinol + NADP(+) + n H(+)(out)</text>
        <dbReference type="Rhea" id="RHEA:42612"/>
        <dbReference type="Rhea" id="RHEA-COMP:9561"/>
        <dbReference type="Rhea" id="RHEA-COMP:9562"/>
        <dbReference type="ChEBI" id="CHEBI:15378"/>
        <dbReference type="ChEBI" id="CHEBI:17757"/>
        <dbReference type="ChEBI" id="CHEBI:57783"/>
        <dbReference type="ChEBI" id="CHEBI:58349"/>
        <dbReference type="ChEBI" id="CHEBI:62192"/>
    </reaction>
</comment>
<comment type="subunit">
    <text evidence="1">NDH is composed of at least 16 different subunits, 5 of which are encoded in the nucleus.</text>
</comment>
<comment type="subcellular location">
    <subcellularLocation>
        <location evidence="1">Plastid</location>
        <location evidence="1">Chloroplast thylakoid membrane</location>
        <topology evidence="1">Peripheral membrane protein</topology>
        <orientation evidence="1">Stromal side</orientation>
    </subcellularLocation>
</comment>
<comment type="similarity">
    <text evidence="1">Belongs to the complex I 30 kDa subunit family.</text>
</comment>
<organism>
    <name type="scientific">Sorghum bicolor</name>
    <name type="common">Sorghum</name>
    <name type="synonym">Sorghum vulgare</name>
    <dbReference type="NCBI Taxonomy" id="4558"/>
    <lineage>
        <taxon>Eukaryota</taxon>
        <taxon>Viridiplantae</taxon>
        <taxon>Streptophyta</taxon>
        <taxon>Embryophyta</taxon>
        <taxon>Tracheophyta</taxon>
        <taxon>Spermatophyta</taxon>
        <taxon>Magnoliopsida</taxon>
        <taxon>Liliopsida</taxon>
        <taxon>Poales</taxon>
        <taxon>Poaceae</taxon>
        <taxon>PACMAD clade</taxon>
        <taxon>Panicoideae</taxon>
        <taxon>Andropogonodae</taxon>
        <taxon>Andropogoneae</taxon>
        <taxon>Sorghinae</taxon>
        <taxon>Sorghum</taxon>
    </lineage>
</organism>
<feature type="chain" id="PRO_0000358305" description="NAD(P)H-quinone oxidoreductase subunit J, chloroplastic">
    <location>
        <begin position="1"/>
        <end position="159"/>
    </location>
</feature>
<protein>
    <recommendedName>
        <fullName evidence="1">NAD(P)H-quinone oxidoreductase subunit J, chloroplastic</fullName>
        <ecNumber evidence="1">7.1.1.-</ecNumber>
    </recommendedName>
    <alternativeName>
        <fullName>NAD(P)H dehydrogenase subunit J</fullName>
    </alternativeName>
    <alternativeName>
        <fullName evidence="1">NADH-plastoquinone oxidoreductase subunit J</fullName>
    </alternativeName>
</protein>
<reference key="1">
    <citation type="journal article" date="2007" name="Theor. Appl. Genet.">
        <title>Complete chloroplast genome sequences of Hordeum vulgare, Sorghum bicolor and Agrostis stolonifera, and comparative analyses with other grass genomes.</title>
        <authorList>
            <person name="Saski C."/>
            <person name="Lee S.-B."/>
            <person name="Fjellheim S."/>
            <person name="Guda C."/>
            <person name="Jansen R.K."/>
            <person name="Luo H."/>
            <person name="Tomkins J."/>
            <person name="Rognli O.A."/>
            <person name="Daniell H."/>
            <person name="Clarke J.L."/>
        </authorList>
    </citation>
    <scope>NUCLEOTIDE SEQUENCE [LARGE SCALE GENOMIC DNA]</scope>
    <source>
        <strain>cv. BTx623</strain>
    </source>
</reference>
<proteinExistence type="inferred from homology"/>
<evidence type="ECO:0000255" key="1">
    <source>
        <dbReference type="HAMAP-Rule" id="MF_01357"/>
    </source>
</evidence>